<dbReference type="EC" id="6.5.1.2" evidence="1"/>
<dbReference type="EMBL" id="CP000312">
    <property type="protein sequence ID" value="ABG87747.1"/>
    <property type="molecule type" value="Genomic_DNA"/>
</dbReference>
<dbReference type="RefSeq" id="WP_011593033.1">
    <property type="nucleotide sequence ID" value="NC_008262.1"/>
</dbReference>
<dbReference type="SMR" id="Q0SQT6"/>
<dbReference type="KEGG" id="cpr:CPR_2245"/>
<dbReference type="Proteomes" id="UP000001824">
    <property type="component" value="Chromosome"/>
</dbReference>
<dbReference type="GO" id="GO:0005829">
    <property type="term" value="C:cytosol"/>
    <property type="evidence" value="ECO:0007669"/>
    <property type="project" value="TreeGrafter"/>
</dbReference>
<dbReference type="GO" id="GO:0003677">
    <property type="term" value="F:DNA binding"/>
    <property type="evidence" value="ECO:0007669"/>
    <property type="project" value="InterPro"/>
</dbReference>
<dbReference type="GO" id="GO:0003911">
    <property type="term" value="F:DNA ligase (NAD+) activity"/>
    <property type="evidence" value="ECO:0007669"/>
    <property type="project" value="UniProtKB-UniRule"/>
</dbReference>
<dbReference type="GO" id="GO:0046872">
    <property type="term" value="F:metal ion binding"/>
    <property type="evidence" value="ECO:0007669"/>
    <property type="project" value="UniProtKB-KW"/>
</dbReference>
<dbReference type="GO" id="GO:0006281">
    <property type="term" value="P:DNA repair"/>
    <property type="evidence" value="ECO:0007669"/>
    <property type="project" value="UniProtKB-KW"/>
</dbReference>
<dbReference type="GO" id="GO:0006260">
    <property type="term" value="P:DNA replication"/>
    <property type="evidence" value="ECO:0007669"/>
    <property type="project" value="UniProtKB-KW"/>
</dbReference>
<dbReference type="CDD" id="cd17748">
    <property type="entry name" value="BRCT_DNA_ligase_like"/>
    <property type="match status" value="1"/>
</dbReference>
<dbReference type="CDD" id="cd00114">
    <property type="entry name" value="LIGANc"/>
    <property type="match status" value="1"/>
</dbReference>
<dbReference type="FunFam" id="1.10.150.20:FF:000006">
    <property type="entry name" value="DNA ligase"/>
    <property type="match status" value="1"/>
</dbReference>
<dbReference type="FunFam" id="1.10.150.20:FF:000007">
    <property type="entry name" value="DNA ligase"/>
    <property type="match status" value="1"/>
</dbReference>
<dbReference type="FunFam" id="2.40.50.140:FF:000012">
    <property type="entry name" value="DNA ligase"/>
    <property type="match status" value="1"/>
</dbReference>
<dbReference type="FunFam" id="3.40.50.10190:FF:000054">
    <property type="entry name" value="DNA ligase"/>
    <property type="match status" value="1"/>
</dbReference>
<dbReference type="Gene3D" id="1.10.150.20">
    <property type="entry name" value="5' to 3' exonuclease, C-terminal subdomain"/>
    <property type="match status" value="2"/>
</dbReference>
<dbReference type="Gene3D" id="3.40.50.10190">
    <property type="entry name" value="BRCT domain"/>
    <property type="match status" value="1"/>
</dbReference>
<dbReference type="Gene3D" id="3.30.470.30">
    <property type="entry name" value="DNA ligase/mRNA capping enzyme"/>
    <property type="match status" value="1"/>
</dbReference>
<dbReference type="Gene3D" id="1.10.287.610">
    <property type="entry name" value="Helix hairpin bin"/>
    <property type="match status" value="1"/>
</dbReference>
<dbReference type="Gene3D" id="2.40.50.140">
    <property type="entry name" value="Nucleic acid-binding proteins"/>
    <property type="match status" value="1"/>
</dbReference>
<dbReference type="HAMAP" id="MF_01588">
    <property type="entry name" value="DNA_ligase_A"/>
    <property type="match status" value="1"/>
</dbReference>
<dbReference type="InterPro" id="IPR001357">
    <property type="entry name" value="BRCT_dom"/>
</dbReference>
<dbReference type="InterPro" id="IPR036420">
    <property type="entry name" value="BRCT_dom_sf"/>
</dbReference>
<dbReference type="InterPro" id="IPR041663">
    <property type="entry name" value="DisA/LigA_HHH"/>
</dbReference>
<dbReference type="InterPro" id="IPR001679">
    <property type="entry name" value="DNA_ligase"/>
</dbReference>
<dbReference type="InterPro" id="IPR033136">
    <property type="entry name" value="DNA_ligase_CS"/>
</dbReference>
<dbReference type="InterPro" id="IPR013839">
    <property type="entry name" value="DNAligase_adenylation"/>
</dbReference>
<dbReference type="InterPro" id="IPR013840">
    <property type="entry name" value="DNAligase_N"/>
</dbReference>
<dbReference type="InterPro" id="IPR003583">
    <property type="entry name" value="Hlx-hairpin-Hlx_DNA-bd_motif"/>
</dbReference>
<dbReference type="InterPro" id="IPR012340">
    <property type="entry name" value="NA-bd_OB-fold"/>
</dbReference>
<dbReference type="InterPro" id="IPR004150">
    <property type="entry name" value="NAD_DNA_ligase_OB"/>
</dbReference>
<dbReference type="InterPro" id="IPR010994">
    <property type="entry name" value="RuvA_2-like"/>
</dbReference>
<dbReference type="NCBIfam" id="TIGR00575">
    <property type="entry name" value="dnlj"/>
    <property type="match status" value="1"/>
</dbReference>
<dbReference type="NCBIfam" id="NF005932">
    <property type="entry name" value="PRK07956.1"/>
    <property type="match status" value="1"/>
</dbReference>
<dbReference type="PANTHER" id="PTHR23389">
    <property type="entry name" value="CHROMOSOME TRANSMISSION FIDELITY FACTOR 18"/>
    <property type="match status" value="1"/>
</dbReference>
<dbReference type="PANTHER" id="PTHR23389:SF9">
    <property type="entry name" value="DNA LIGASE"/>
    <property type="match status" value="1"/>
</dbReference>
<dbReference type="Pfam" id="PF00533">
    <property type="entry name" value="BRCT"/>
    <property type="match status" value="1"/>
</dbReference>
<dbReference type="Pfam" id="PF01653">
    <property type="entry name" value="DNA_ligase_aden"/>
    <property type="match status" value="1"/>
</dbReference>
<dbReference type="Pfam" id="PF03120">
    <property type="entry name" value="DNA_ligase_OB"/>
    <property type="match status" value="1"/>
</dbReference>
<dbReference type="Pfam" id="PF12826">
    <property type="entry name" value="HHH_2"/>
    <property type="match status" value="1"/>
</dbReference>
<dbReference type="Pfam" id="PF14520">
    <property type="entry name" value="HHH_5"/>
    <property type="match status" value="1"/>
</dbReference>
<dbReference type="PIRSF" id="PIRSF001604">
    <property type="entry name" value="LigA"/>
    <property type="match status" value="1"/>
</dbReference>
<dbReference type="SMART" id="SM00292">
    <property type="entry name" value="BRCT"/>
    <property type="match status" value="1"/>
</dbReference>
<dbReference type="SMART" id="SM00278">
    <property type="entry name" value="HhH1"/>
    <property type="match status" value="3"/>
</dbReference>
<dbReference type="SMART" id="SM00532">
    <property type="entry name" value="LIGANc"/>
    <property type="match status" value="1"/>
</dbReference>
<dbReference type="SUPFAM" id="SSF52113">
    <property type="entry name" value="BRCT domain"/>
    <property type="match status" value="1"/>
</dbReference>
<dbReference type="SUPFAM" id="SSF56091">
    <property type="entry name" value="DNA ligase/mRNA capping enzyme, catalytic domain"/>
    <property type="match status" value="1"/>
</dbReference>
<dbReference type="SUPFAM" id="SSF50249">
    <property type="entry name" value="Nucleic acid-binding proteins"/>
    <property type="match status" value="1"/>
</dbReference>
<dbReference type="SUPFAM" id="SSF47781">
    <property type="entry name" value="RuvA domain 2-like"/>
    <property type="match status" value="1"/>
</dbReference>
<dbReference type="PROSITE" id="PS50172">
    <property type="entry name" value="BRCT"/>
    <property type="match status" value="1"/>
</dbReference>
<dbReference type="PROSITE" id="PS01056">
    <property type="entry name" value="DNA_LIGASE_N2"/>
    <property type="match status" value="1"/>
</dbReference>
<proteinExistence type="inferred from homology"/>
<name>DNLJ_CLOPS</name>
<gene>
    <name evidence="1" type="primary">ligA</name>
    <name type="ordered locus">CPR_2245</name>
</gene>
<protein>
    <recommendedName>
        <fullName evidence="1">DNA ligase</fullName>
        <ecNumber evidence="1">6.5.1.2</ecNumber>
    </recommendedName>
    <alternativeName>
        <fullName evidence="1">Polydeoxyribonucleotide synthase [NAD(+)]</fullName>
    </alternativeName>
</protein>
<evidence type="ECO:0000255" key="1">
    <source>
        <dbReference type="HAMAP-Rule" id="MF_01588"/>
    </source>
</evidence>
<keyword id="KW-0227">DNA damage</keyword>
<keyword id="KW-0234">DNA repair</keyword>
<keyword id="KW-0235">DNA replication</keyword>
<keyword id="KW-0436">Ligase</keyword>
<keyword id="KW-0460">Magnesium</keyword>
<keyword id="KW-0464">Manganese</keyword>
<keyword id="KW-0479">Metal-binding</keyword>
<keyword id="KW-0520">NAD</keyword>
<keyword id="KW-0862">Zinc</keyword>
<accession>Q0SQT6</accession>
<organism>
    <name type="scientific">Clostridium perfringens (strain SM101 / Type A)</name>
    <dbReference type="NCBI Taxonomy" id="289380"/>
    <lineage>
        <taxon>Bacteria</taxon>
        <taxon>Bacillati</taxon>
        <taxon>Bacillota</taxon>
        <taxon>Clostridia</taxon>
        <taxon>Eubacteriales</taxon>
        <taxon>Clostridiaceae</taxon>
        <taxon>Clostridium</taxon>
    </lineage>
</organism>
<comment type="function">
    <text evidence="1">DNA ligase that catalyzes the formation of phosphodiester linkages between 5'-phosphoryl and 3'-hydroxyl groups in double-stranded DNA using NAD as a coenzyme and as the energy source for the reaction. It is essential for DNA replication and repair of damaged DNA.</text>
</comment>
<comment type="catalytic activity">
    <reaction evidence="1">
        <text>NAD(+) + (deoxyribonucleotide)n-3'-hydroxyl + 5'-phospho-(deoxyribonucleotide)m = (deoxyribonucleotide)n+m + AMP + beta-nicotinamide D-nucleotide.</text>
        <dbReference type="EC" id="6.5.1.2"/>
    </reaction>
</comment>
<comment type="cofactor">
    <cofactor evidence="1">
        <name>Mg(2+)</name>
        <dbReference type="ChEBI" id="CHEBI:18420"/>
    </cofactor>
    <cofactor evidence="1">
        <name>Mn(2+)</name>
        <dbReference type="ChEBI" id="CHEBI:29035"/>
    </cofactor>
</comment>
<comment type="similarity">
    <text evidence="1">Belongs to the NAD-dependent DNA ligase family. LigA subfamily.</text>
</comment>
<sequence length="662" mass="75047">MDKKKLIEELVEELNKYAYEYYVLGNSSVTDKDYDKKYYELVDLEKETGYKLPYSPTQRVGDVILPEFKKYTHKARLWSLDKAQTLEEIREWHNRNVKFLEEYNRTSDEELPPLKYILTKKFDGLTINLSYDENGVLITGATRGTGAIGEDVTAQVKTIKSIPLKIDCHDFLEIHGEAIMTTEAFEKYNSEADTPLKNLRNGAAGALRNLNVAETAKRNLSAFFYDVGYKEGAPFKTYMEMLNFIKTKGFPMDDYIRECKTLDEIQKEIDYIRDIRFDLNYDIDGLVIAIDDIRTRELLGYTVKFPKWAIAYKFEAQEATTKLLDVEWNVGRSGRVSPTAILEPVELAGVTVKRATLNNMDDIARKGVRLGAEVFVRRSNDVIPEIMGVVPESLEGTKEIEEPKVCPACGAHLVHEGVHIYCENTLGCKPQMVKTIVHFAGREAMNIAGFSERTAEQLFEKLDIRDISDLYKLEYEKLLDLDKFGPKKAQNLLDAIEKSKDCTLEAFLYSLGIPNVGVKTAKDLVKRFESLENLEKATFEELVSVQDVGDIVARSIIEFFKEERTLKVINELLSLGVNPHYEKKEVLESPFMGKTVVVTGTLENYSRTSIKEKLESLGAKVSGSVSKKTDFVIAGEAAGSKYDKAKSLGITILSEEEFENMI</sequence>
<reference key="1">
    <citation type="journal article" date="2006" name="Genome Res.">
        <title>Skewed genomic variability in strains of the toxigenic bacterial pathogen, Clostridium perfringens.</title>
        <authorList>
            <person name="Myers G.S.A."/>
            <person name="Rasko D.A."/>
            <person name="Cheung J.K."/>
            <person name="Ravel J."/>
            <person name="Seshadri R."/>
            <person name="DeBoy R.T."/>
            <person name="Ren Q."/>
            <person name="Varga J."/>
            <person name="Awad M.M."/>
            <person name="Brinkac L.M."/>
            <person name="Daugherty S.C."/>
            <person name="Haft D.H."/>
            <person name="Dodson R.J."/>
            <person name="Madupu R."/>
            <person name="Nelson W.C."/>
            <person name="Rosovitz M.J."/>
            <person name="Sullivan S.A."/>
            <person name="Khouri H."/>
            <person name="Dimitrov G.I."/>
            <person name="Watkins K.L."/>
            <person name="Mulligan S."/>
            <person name="Benton J."/>
            <person name="Radune D."/>
            <person name="Fisher D.J."/>
            <person name="Atkins H.S."/>
            <person name="Hiscox T."/>
            <person name="Jost B.H."/>
            <person name="Billington S.J."/>
            <person name="Songer J.G."/>
            <person name="McClane B.A."/>
            <person name="Titball R.W."/>
            <person name="Rood J.I."/>
            <person name="Melville S.B."/>
            <person name="Paulsen I.T."/>
        </authorList>
    </citation>
    <scope>NUCLEOTIDE SEQUENCE [LARGE SCALE GENOMIC DNA]</scope>
    <source>
        <strain>SM101 / Type A</strain>
    </source>
</reference>
<feature type="chain" id="PRO_0000313201" description="DNA ligase">
    <location>
        <begin position="1"/>
        <end position="662"/>
    </location>
</feature>
<feature type="domain" description="BRCT" evidence="1">
    <location>
        <begin position="586"/>
        <end position="662"/>
    </location>
</feature>
<feature type="active site" description="N6-AMP-lysine intermediate" evidence="1">
    <location>
        <position position="121"/>
    </location>
</feature>
<feature type="binding site" evidence="1">
    <location>
        <begin position="31"/>
        <end position="35"/>
    </location>
    <ligand>
        <name>NAD(+)</name>
        <dbReference type="ChEBI" id="CHEBI:57540"/>
    </ligand>
</feature>
<feature type="binding site" evidence="1">
    <location>
        <begin position="79"/>
        <end position="80"/>
    </location>
    <ligand>
        <name>NAD(+)</name>
        <dbReference type="ChEBI" id="CHEBI:57540"/>
    </ligand>
</feature>
<feature type="binding site" evidence="1">
    <location>
        <position position="143"/>
    </location>
    <ligand>
        <name>NAD(+)</name>
        <dbReference type="ChEBI" id="CHEBI:57540"/>
    </ligand>
</feature>
<feature type="binding site" evidence="1">
    <location>
        <position position="177"/>
    </location>
    <ligand>
        <name>NAD(+)</name>
        <dbReference type="ChEBI" id="CHEBI:57540"/>
    </ligand>
</feature>
<feature type="binding site" evidence="1">
    <location>
        <position position="313"/>
    </location>
    <ligand>
        <name>NAD(+)</name>
        <dbReference type="ChEBI" id="CHEBI:57540"/>
    </ligand>
</feature>
<feature type="binding site" evidence="1">
    <location>
        <position position="406"/>
    </location>
    <ligand>
        <name>Zn(2+)</name>
        <dbReference type="ChEBI" id="CHEBI:29105"/>
    </ligand>
</feature>
<feature type="binding site" evidence="1">
    <location>
        <position position="409"/>
    </location>
    <ligand>
        <name>Zn(2+)</name>
        <dbReference type="ChEBI" id="CHEBI:29105"/>
    </ligand>
</feature>
<feature type="binding site" evidence="1">
    <location>
        <position position="422"/>
    </location>
    <ligand>
        <name>Zn(2+)</name>
        <dbReference type="ChEBI" id="CHEBI:29105"/>
    </ligand>
</feature>
<feature type="binding site" evidence="1">
    <location>
        <position position="428"/>
    </location>
    <ligand>
        <name>Zn(2+)</name>
        <dbReference type="ChEBI" id="CHEBI:29105"/>
    </ligand>
</feature>